<name>CAS1_STRTR</name>
<protein>
    <recommendedName>
        <fullName>CRISPR-associated endonuclease Cas1</fullName>
        <ecNumber>3.1.-.-</ecNumber>
    </recommendedName>
</protein>
<keyword id="KW-0002">3D-structure</keyword>
<keyword id="KW-0051">Antiviral defense</keyword>
<keyword id="KW-0238">DNA-binding</keyword>
<keyword id="KW-0255">Endonuclease</keyword>
<keyword id="KW-0378">Hydrolase</keyword>
<keyword id="KW-0460">Magnesium</keyword>
<keyword id="KW-0464">Manganese</keyword>
<keyword id="KW-0479">Metal-binding</keyword>
<keyword id="KW-0540">Nuclease</keyword>
<reference key="1">
    <citation type="journal article" date="2011" name="Nucleic Acids Res.">
        <title>The Streptococcus thermophilus CRISPR/Cas system provides immunity in Escherichia coli.</title>
        <authorList>
            <person name="Sapranauskas R."/>
            <person name="Gasiunas G."/>
            <person name="Fremaux C."/>
            <person name="Barrangou R."/>
            <person name="Horvath P."/>
            <person name="Siksnys V."/>
        </authorList>
    </citation>
    <scope>NUCLEOTIDE SEQUENCE [GENOMIC DNA]</scope>
    <scope>FUNCTION IN PLASMID RESISTANCE</scope>
    <scope>EXPRESSION OF CRISPR3/CAS IN E.COLI</scope>
    <scope>DISRUPTION PHENOTYPE</scope>
    <source>
        <strain>DGCC7710</strain>
    </source>
</reference>
<sequence>MAGWRTVVVNIHSKLSYKNNHLIFRNSYKTEMIHLSEIDILLLETTDIVLTTMLVKRLVDENILVIFCDDKRLPTAFLTPYYARHDSSLQIARQIAWKENVKCEVWTAIIAQKILNQSYYLGECSFFEKSQSIMELYHGLERFDPSNREGHSARIYFNTLFGNDFTRESDNDINAALDYGYTLLLSMFAREVVVCGCMTQIGLKHANQFNQFNLASDIMEPFRPIIDRIVYQNRHNNFVKIKKELFSIFSETYLYNGKEMYLSNIVSDYTKKVIKALNQLGEEIPEFRI</sequence>
<feature type="chain" id="PRO_0000417963" description="CRISPR-associated endonuclease Cas1">
    <location>
        <begin position="1"/>
        <end position="289"/>
    </location>
</feature>
<feature type="binding site" evidence="1">
    <location>
        <position position="149"/>
    </location>
    <ligand>
        <name>Mn(2+)</name>
        <dbReference type="ChEBI" id="CHEBI:29035"/>
    </ligand>
</feature>
<feature type="binding site" evidence="1">
    <location>
        <position position="205"/>
    </location>
    <ligand>
        <name>Mn(2+)</name>
        <dbReference type="ChEBI" id="CHEBI:29035"/>
    </ligand>
</feature>
<feature type="binding site" evidence="1">
    <location>
        <position position="220"/>
    </location>
    <ligand>
        <name>Mn(2+)</name>
        <dbReference type="ChEBI" id="CHEBI:29035"/>
    </ligand>
</feature>
<proteinExistence type="evidence at protein level"/>
<dbReference type="EC" id="3.1.-.-"/>
<dbReference type="EMBL" id="HQ712120">
    <property type="protein sequence ID" value="AEM62888.1"/>
    <property type="molecule type" value="Genomic_DNA"/>
</dbReference>
<dbReference type="RefSeq" id="WP_011681469.1">
    <property type="nucleotide sequence ID" value="NZ_WMLD01000001.1"/>
</dbReference>
<dbReference type="PDB" id="6QXF">
    <property type="method" value="EM"/>
    <property type="resolution" value="3.60 A"/>
    <property type="chains" value="I/J/L/M/O/P/R/S=1-289"/>
</dbReference>
<dbReference type="PDB" id="6QXT">
    <property type="method" value="EM"/>
    <property type="resolution" value="8.90 A"/>
    <property type="chains" value="I/J/L/M/O/P/R/S/U/V/Y/Z/i/j/l/m/o/p/r/s/u/v/y/z=1-289"/>
</dbReference>
<dbReference type="PDB" id="6QY3">
    <property type="method" value="EM"/>
    <property type="resolution" value="9.10 A"/>
    <property type="chains" value="I/J/L/M/O/P/R/S/U/V/Y/Z/i/j/l/m/o/p/r/s/u/v/y/z=1-289"/>
</dbReference>
<dbReference type="PDB" id="8PK1">
    <property type="method" value="EM"/>
    <property type="resolution" value="3.17 A"/>
    <property type="chains" value="B/C/E/F=1-289"/>
</dbReference>
<dbReference type="PDB" id="8Q2N">
    <property type="method" value="EM"/>
    <property type="resolution" value="2.98 A"/>
    <property type="chains" value="B/C/E/F=1-289"/>
</dbReference>
<dbReference type="PDBsum" id="6QXF"/>
<dbReference type="PDBsum" id="6QXT"/>
<dbReference type="PDBsum" id="6QY3"/>
<dbReference type="PDBsum" id="8PK1"/>
<dbReference type="PDBsum" id="8Q2N"/>
<dbReference type="EMDB" id="EMD-17722"/>
<dbReference type="EMDB" id="EMD-18113"/>
<dbReference type="EMDB" id="EMD-4668"/>
<dbReference type="EMDB" id="EMD-4670"/>
<dbReference type="EMDB" id="EMD-4671"/>
<dbReference type="SMR" id="G3ECR2"/>
<dbReference type="eggNOG" id="COG1518">
    <property type="taxonomic scope" value="Bacteria"/>
</dbReference>
<dbReference type="OMA" id="DDLMEPY"/>
<dbReference type="OrthoDB" id="9803119at2"/>
<dbReference type="GO" id="GO:0003677">
    <property type="term" value="F:DNA binding"/>
    <property type="evidence" value="ECO:0007669"/>
    <property type="project" value="UniProtKB-KW"/>
</dbReference>
<dbReference type="GO" id="GO:0004520">
    <property type="term" value="F:DNA endonuclease activity"/>
    <property type="evidence" value="ECO:0007669"/>
    <property type="project" value="InterPro"/>
</dbReference>
<dbReference type="GO" id="GO:0046872">
    <property type="term" value="F:metal ion binding"/>
    <property type="evidence" value="ECO:0007669"/>
    <property type="project" value="UniProtKB-UniRule"/>
</dbReference>
<dbReference type="GO" id="GO:0051607">
    <property type="term" value="P:defense response to virus"/>
    <property type="evidence" value="ECO:0007669"/>
    <property type="project" value="UniProtKB-UniRule"/>
</dbReference>
<dbReference type="GO" id="GO:0043571">
    <property type="term" value="P:maintenance of CRISPR repeat elements"/>
    <property type="evidence" value="ECO:0007669"/>
    <property type="project" value="UniProtKB-UniRule"/>
</dbReference>
<dbReference type="CDD" id="cd09720">
    <property type="entry name" value="Cas1_II"/>
    <property type="match status" value="1"/>
</dbReference>
<dbReference type="Gene3D" id="1.20.120.920">
    <property type="entry name" value="CRISPR-associated endonuclease Cas1, C-terminal domain"/>
    <property type="match status" value="1"/>
</dbReference>
<dbReference type="HAMAP" id="MF_01470">
    <property type="entry name" value="Cas1"/>
    <property type="match status" value="1"/>
</dbReference>
<dbReference type="InterPro" id="IPR050646">
    <property type="entry name" value="Cas1"/>
</dbReference>
<dbReference type="InterPro" id="IPR002729">
    <property type="entry name" value="CRISPR-assoc_Cas1"/>
</dbReference>
<dbReference type="InterPro" id="IPR042206">
    <property type="entry name" value="CRISPR-assoc_Cas1_C"/>
</dbReference>
<dbReference type="InterPro" id="IPR019855">
    <property type="entry name" value="CRISPR-assoc_Cas1_NMENI"/>
</dbReference>
<dbReference type="NCBIfam" id="TIGR00287">
    <property type="entry name" value="cas1"/>
    <property type="match status" value="1"/>
</dbReference>
<dbReference type="NCBIfam" id="TIGR03639">
    <property type="entry name" value="cas1_NMENI"/>
    <property type="match status" value="1"/>
</dbReference>
<dbReference type="PANTHER" id="PTHR34353">
    <property type="entry name" value="CRISPR-ASSOCIATED ENDONUCLEASE CAS1 1"/>
    <property type="match status" value="1"/>
</dbReference>
<dbReference type="PANTHER" id="PTHR34353:SF2">
    <property type="entry name" value="CRISPR-ASSOCIATED ENDONUCLEASE CAS1 1"/>
    <property type="match status" value="1"/>
</dbReference>
<dbReference type="Pfam" id="PF01867">
    <property type="entry name" value="Cas_Cas1"/>
    <property type="match status" value="1"/>
</dbReference>
<organism>
    <name type="scientific">Streptococcus thermophilus</name>
    <dbReference type="NCBI Taxonomy" id="1308"/>
    <lineage>
        <taxon>Bacteria</taxon>
        <taxon>Bacillati</taxon>
        <taxon>Bacillota</taxon>
        <taxon>Bacilli</taxon>
        <taxon>Lactobacillales</taxon>
        <taxon>Streptococcaceae</taxon>
        <taxon>Streptococcus</taxon>
    </lineage>
</organism>
<gene>
    <name type="primary">cas1</name>
</gene>
<evidence type="ECO:0000250" key="1"/>
<evidence type="ECO:0000269" key="2">
    <source>
    </source>
</evidence>
<evidence type="ECO:0000305" key="3"/>
<accession>G3ECR2</accession>
<comment type="function">
    <text evidence="1 2 3">CRISPR (clustered regularly interspaced short palindromic repeat), is an adaptive immune system that provides protection against mobile genetic elements (viruses, transposable elements and conjugative plasmids). CRISPR clusters contain spacers, sequences complementary to antecedent mobile elements, and target invading nucleic acids. CRISPR clusters are transcribed and processed into CRISPR RNA (crRNA) (Probable). Acts as a dsDNA endonuclease. Involved in the integration of spacer DNA into the CRISPR cassette (By similarity). When the CRISPR3/cas system consisting of cas9-cas1-cas2-csn2-CRISPR3 or just cas9-CRISPR3 is expressed in E.coli it prevents plasmids homologous to spacers 1 or 2 from transforming.</text>
</comment>
<comment type="cofactor">
    <cofactor evidence="1">
        <name>Mg(2+)</name>
        <dbReference type="ChEBI" id="CHEBI:18420"/>
    </cofactor>
    <cofactor evidence="1">
        <name>Mn(2+)</name>
        <dbReference type="ChEBI" id="CHEBI:29035"/>
    </cofactor>
</comment>
<comment type="subunit">
    <text evidence="1">Homodimer, forms a heterotetramer with a Cas2 homodimer.</text>
</comment>
<comment type="disruption phenotype">
    <text evidence="2">Plasmid transformation is still inhibited.</text>
</comment>
<comment type="similarity">
    <text evidence="3">Belongs to the CRISPR-associated endonuclease Cas1 family.</text>
</comment>